<name>RN170_XENTR</name>
<sequence length="257" mass="29645">MADNQEGRPYFPLDEGSIIEGVSDQVIVVVLLSFVAVGSLLYLLLRNDEQNIHPENQDRVRAVREQLQNEQETPPPPRPQFYSDMTCPVCLQQATFPVETNCGHLFCGSCIIAYWRYGSWLGAINCPICRQTVTLIFPLFQATEQEDSQNILREAIGYNRRFSGQPRSLMDRIMDLPTLLRHAFREMFSVGGLFWMFRIRIVLCLLGALFYLVSPLDIIPEAVFGLLGFLDDFFVLFLLLIYISIMYREVVTQRLYR</sequence>
<comment type="function">
    <text evidence="1">E3 ubiquitin-protein ligase that plays an essential role in stimulus-induced inositol 1,4,5-trisphosphate receptor (ITPR) ubiquitination and degradation via the endoplasmic reticulum-associated degradation (ERAD) pathway. Also involved in ITPR turnover in resting cells.</text>
</comment>
<comment type="catalytic activity">
    <reaction>
        <text>S-ubiquitinyl-[E2 ubiquitin-conjugating enzyme]-L-cysteine + [acceptor protein]-L-lysine = [E2 ubiquitin-conjugating enzyme]-L-cysteine + N(6)-ubiquitinyl-[acceptor protein]-L-lysine.</text>
        <dbReference type="EC" id="2.3.2.27"/>
    </reaction>
</comment>
<comment type="pathway">
    <text>Protein modification; protein ubiquitination.</text>
</comment>
<comment type="subcellular location">
    <subcellularLocation>
        <location evidence="1">Endoplasmic reticulum membrane</location>
        <topology evidence="1">Multi-pass membrane protein</topology>
    </subcellularLocation>
</comment>
<evidence type="ECO:0000250" key="1">
    <source>
        <dbReference type="UniProtKB" id="Q96K19"/>
    </source>
</evidence>
<evidence type="ECO:0000255" key="2"/>
<evidence type="ECO:0000255" key="3">
    <source>
        <dbReference type="PROSITE-ProRule" id="PRU00175"/>
    </source>
</evidence>
<evidence type="ECO:0000305" key="4"/>
<dbReference type="EC" id="2.3.2.27"/>
<dbReference type="EMBL" id="CR848624">
    <property type="protein sequence ID" value="CAJ83943.1"/>
    <property type="molecule type" value="mRNA"/>
</dbReference>
<dbReference type="RefSeq" id="NP_001016872.1">
    <property type="nucleotide sequence ID" value="NM_001016872.2"/>
</dbReference>
<dbReference type="SMR" id="Q28DS3"/>
<dbReference type="FunCoup" id="Q28DS3">
    <property type="interactions" value="924"/>
</dbReference>
<dbReference type="STRING" id="8364.ENSXETP00000031755"/>
<dbReference type="PaxDb" id="8364-ENSXETP00000057130"/>
<dbReference type="GeneID" id="549626"/>
<dbReference type="KEGG" id="xtr:549626"/>
<dbReference type="AGR" id="Xenbase:XB-GENE-5789582"/>
<dbReference type="CTD" id="81790"/>
<dbReference type="Xenbase" id="XB-GENE-5789582">
    <property type="gene designation" value="rnf170"/>
</dbReference>
<dbReference type="eggNOG" id="KOG2164">
    <property type="taxonomic scope" value="Eukaryota"/>
</dbReference>
<dbReference type="HOGENOM" id="CLU_072335_0_0_1"/>
<dbReference type="InParanoid" id="Q28DS3"/>
<dbReference type="OMA" id="CRQEEQN"/>
<dbReference type="OrthoDB" id="9049620at2759"/>
<dbReference type="PhylomeDB" id="Q28DS3"/>
<dbReference type="TreeFam" id="TF328342"/>
<dbReference type="UniPathway" id="UPA00143"/>
<dbReference type="Proteomes" id="UP000008143">
    <property type="component" value="Chromosome 1"/>
</dbReference>
<dbReference type="Bgee" id="ENSXETG00000027376">
    <property type="expression patterns" value="Expressed in egg cell and 14 other cell types or tissues"/>
</dbReference>
<dbReference type="GO" id="GO:0005789">
    <property type="term" value="C:endoplasmic reticulum membrane"/>
    <property type="evidence" value="ECO:0007669"/>
    <property type="project" value="UniProtKB-SubCell"/>
</dbReference>
<dbReference type="GO" id="GO:0061630">
    <property type="term" value="F:ubiquitin protein ligase activity"/>
    <property type="evidence" value="ECO:0007669"/>
    <property type="project" value="InterPro"/>
</dbReference>
<dbReference type="GO" id="GO:0008270">
    <property type="term" value="F:zinc ion binding"/>
    <property type="evidence" value="ECO:0007669"/>
    <property type="project" value="UniProtKB-KW"/>
</dbReference>
<dbReference type="GO" id="GO:0016567">
    <property type="term" value="P:protein ubiquitination"/>
    <property type="evidence" value="ECO:0007669"/>
    <property type="project" value="UniProtKB-UniPathway"/>
</dbReference>
<dbReference type="CDD" id="cd16553">
    <property type="entry name" value="RING-HC_RNF170"/>
    <property type="match status" value="1"/>
</dbReference>
<dbReference type="Gene3D" id="3.30.40.10">
    <property type="entry name" value="Zinc/RING finger domain, C3HC4 (zinc finger)"/>
    <property type="match status" value="1"/>
</dbReference>
<dbReference type="InterPro" id="IPR010652">
    <property type="entry name" value="DUF1232"/>
</dbReference>
<dbReference type="InterPro" id="IPR038896">
    <property type="entry name" value="RNF170"/>
</dbReference>
<dbReference type="InterPro" id="IPR027370">
    <property type="entry name" value="Znf-RING_euk"/>
</dbReference>
<dbReference type="InterPro" id="IPR001841">
    <property type="entry name" value="Znf_RING"/>
</dbReference>
<dbReference type="InterPro" id="IPR013083">
    <property type="entry name" value="Znf_RING/FYVE/PHD"/>
</dbReference>
<dbReference type="InterPro" id="IPR017907">
    <property type="entry name" value="Znf_RING_CS"/>
</dbReference>
<dbReference type="PANTHER" id="PTHR22894:SF1">
    <property type="entry name" value="E3 UBIQUITIN-PROTEIN LIGASE RNF170"/>
    <property type="match status" value="1"/>
</dbReference>
<dbReference type="PANTHER" id="PTHR22894">
    <property type="entry name" value="RING-TYPE DOMAIN-CONTAINING PROTEIN"/>
    <property type="match status" value="1"/>
</dbReference>
<dbReference type="Pfam" id="PF06803">
    <property type="entry name" value="DUF1232"/>
    <property type="match status" value="1"/>
</dbReference>
<dbReference type="Pfam" id="PF13445">
    <property type="entry name" value="zf-RING_UBOX"/>
    <property type="match status" value="1"/>
</dbReference>
<dbReference type="SMART" id="SM00184">
    <property type="entry name" value="RING"/>
    <property type="match status" value="1"/>
</dbReference>
<dbReference type="SUPFAM" id="SSF57850">
    <property type="entry name" value="RING/U-box"/>
    <property type="match status" value="1"/>
</dbReference>
<dbReference type="PROSITE" id="PS00518">
    <property type="entry name" value="ZF_RING_1"/>
    <property type="match status" value="1"/>
</dbReference>
<dbReference type="PROSITE" id="PS50089">
    <property type="entry name" value="ZF_RING_2"/>
    <property type="match status" value="1"/>
</dbReference>
<protein>
    <recommendedName>
        <fullName>E3 ubiquitin-protein ligase RNF170</fullName>
        <ecNumber>2.3.2.27</ecNumber>
    </recommendedName>
    <alternativeName>
        <fullName>RING finger protein 170</fullName>
    </alternativeName>
    <alternativeName>
        <fullName evidence="4">RING-type E3 ubiquitin transferase RNF170</fullName>
    </alternativeName>
</protein>
<proteinExistence type="evidence at transcript level"/>
<accession>Q28DS3</accession>
<organism>
    <name type="scientific">Xenopus tropicalis</name>
    <name type="common">Western clawed frog</name>
    <name type="synonym">Silurana tropicalis</name>
    <dbReference type="NCBI Taxonomy" id="8364"/>
    <lineage>
        <taxon>Eukaryota</taxon>
        <taxon>Metazoa</taxon>
        <taxon>Chordata</taxon>
        <taxon>Craniata</taxon>
        <taxon>Vertebrata</taxon>
        <taxon>Euteleostomi</taxon>
        <taxon>Amphibia</taxon>
        <taxon>Batrachia</taxon>
        <taxon>Anura</taxon>
        <taxon>Pipoidea</taxon>
        <taxon>Pipidae</taxon>
        <taxon>Xenopodinae</taxon>
        <taxon>Xenopus</taxon>
        <taxon>Silurana</taxon>
    </lineage>
</organism>
<gene>
    <name type="primary">rnf170</name>
    <name type="ORF">TGas116k14.1</name>
</gene>
<keyword id="KW-0256">Endoplasmic reticulum</keyword>
<keyword id="KW-0472">Membrane</keyword>
<keyword id="KW-0479">Metal-binding</keyword>
<keyword id="KW-1185">Reference proteome</keyword>
<keyword id="KW-0808">Transferase</keyword>
<keyword id="KW-0812">Transmembrane</keyword>
<keyword id="KW-1133">Transmembrane helix</keyword>
<keyword id="KW-0833">Ubl conjugation pathway</keyword>
<keyword id="KW-0862">Zinc</keyword>
<keyword id="KW-0863">Zinc-finger</keyword>
<feature type="chain" id="PRO_0000280704" description="E3 ubiquitin-protein ligase RNF170">
    <location>
        <begin position="1"/>
        <end position="257"/>
    </location>
</feature>
<feature type="topological domain" description="Lumenal" evidence="2">
    <location>
        <begin position="1"/>
        <end position="24"/>
    </location>
</feature>
<feature type="transmembrane region" description="Helical" evidence="2">
    <location>
        <begin position="25"/>
        <end position="45"/>
    </location>
</feature>
<feature type="topological domain" description="Cytoplasmic" evidence="2">
    <location>
        <begin position="46"/>
        <end position="200"/>
    </location>
</feature>
<feature type="transmembrane region" description="Helical" evidence="2">
    <location>
        <begin position="201"/>
        <end position="221"/>
    </location>
</feature>
<feature type="topological domain" description="Lumenal" evidence="2">
    <location>
        <position position="222"/>
    </location>
</feature>
<feature type="transmembrane region" description="Helical" evidence="2">
    <location>
        <begin position="223"/>
        <end position="243"/>
    </location>
</feature>
<feature type="topological domain" description="Cytoplasmic" evidence="2">
    <location>
        <begin position="244"/>
        <end position="257"/>
    </location>
</feature>
<feature type="zinc finger region" description="RING-type" evidence="3">
    <location>
        <begin position="87"/>
        <end position="130"/>
    </location>
</feature>
<reference key="1">
    <citation type="submission" date="2006-10" db="EMBL/GenBank/DDBJ databases">
        <authorList>
            <consortium name="Sanger Xenopus tropicalis EST/cDNA project"/>
        </authorList>
    </citation>
    <scope>NUCLEOTIDE SEQUENCE [LARGE SCALE MRNA]</scope>
    <source>
        <tissue>Gastrula</tissue>
    </source>
</reference>